<reference key="1">
    <citation type="journal article" date="1994" name="Plant Mol. Biol.">
        <title>Cloning of omega 3 desaturase from cyanobacteria and its use in altering the degree of membrane-lipid unsaturation.</title>
        <authorList>
            <person name="Sakamoto T."/>
            <person name="Los D.A."/>
            <person name="Higashi S."/>
            <person name="Wada H."/>
            <person name="Nishida I."/>
            <person name="Ohmori M."/>
            <person name="Murata N."/>
        </authorList>
    </citation>
    <scope>NUCLEOTIDE SEQUENCE [GENOMIC DNA]</scope>
    <scope>FUNCTION</scope>
    <scope>CATALYTIC ACTIVITY</scope>
    <scope>PATHWAY</scope>
    <scope>INDUCTION</scope>
    <scope>DISRUPTION PHENOTYPE</scope>
    <source>
        <strain>ATCC 27184 / PCC 6803 / N-1</strain>
    </source>
</reference>
<reference key="2">
    <citation type="journal article" date="1996" name="DNA Res.">
        <title>Sequence analysis of the genome of the unicellular cyanobacterium Synechocystis sp. strain PCC6803. II. Sequence determination of the entire genome and assignment of potential protein-coding regions.</title>
        <authorList>
            <person name="Kaneko T."/>
            <person name="Sato S."/>
            <person name="Kotani H."/>
            <person name="Tanaka A."/>
            <person name="Asamizu E."/>
            <person name="Nakamura Y."/>
            <person name="Miyajima N."/>
            <person name="Hirosawa M."/>
            <person name="Sugiura M."/>
            <person name="Sasamoto S."/>
            <person name="Kimura T."/>
            <person name="Hosouchi T."/>
            <person name="Matsuno A."/>
            <person name="Muraki A."/>
            <person name="Nakazaki N."/>
            <person name="Naruo K."/>
            <person name="Okumura S."/>
            <person name="Shimpo S."/>
            <person name="Takeuchi C."/>
            <person name="Wada T."/>
            <person name="Watanabe A."/>
            <person name="Yamada M."/>
            <person name="Yasuda M."/>
            <person name="Tabata S."/>
        </authorList>
    </citation>
    <scope>NUCLEOTIDE SEQUENCE [LARGE SCALE GENOMIC DNA]</scope>
    <source>
        <strain>ATCC 27184 / PCC 6803 / Kazusa</strain>
    </source>
</reference>
<reference key="3">
    <citation type="journal article" date="1996" name="EMBO J.">
        <title>Targeted mutagenesis of acyl-lipid desaturases in Synechocystis: evidence for the important roles of polyunsaturated membrane lipids in growth, respiration and photosynthesis.</title>
        <authorList>
            <person name="Tasaka Y."/>
            <person name="Gombos Z."/>
            <person name="Nishiyama Y."/>
            <person name="Mohanty P."/>
            <person name="Ohba T."/>
            <person name="Ohki K."/>
            <person name="Murata N."/>
        </authorList>
    </citation>
    <scope>PATHWAY</scope>
    <scope>DISRUPTION PHENOTYPE</scope>
</reference>
<reference key="4">
    <citation type="journal article" date="1998" name="Proc. Natl. Acad. Sci. U.S.A.">
        <title>Light-induced expression of fatty acid desaturase genes.</title>
        <authorList>
            <person name="Kis M."/>
            <person name="Zsiros O."/>
            <person name="Farkas T."/>
            <person name="Wada H."/>
            <person name="Nagy F."/>
            <person name="Gombos Z."/>
        </authorList>
    </citation>
    <scope>TRANSCRIPTIONAL REGULATION</scope>
    <source>
        <strain>ATCC 27184 / PCC 6803 / N-1</strain>
    </source>
</reference>
<reference key="5">
    <citation type="journal article" date="2000" name="Biochem. Soc. Trans.">
        <title>Perception and transduction of low-temperature signals to induce desaturation of fatty acids.</title>
        <authorList>
            <person name="Suzuki I."/>
            <person name="Los D.A."/>
            <person name="Murata N."/>
        </authorList>
    </citation>
    <scope>TRANSCRIPTIONAL REGULATION</scope>
    <source>
        <strain>ATCC 27184 / PCC 6803 / N-1</strain>
    </source>
</reference>
<keyword id="KW-0275">Fatty acid biosynthesis</keyword>
<keyword id="KW-0276">Fatty acid metabolism</keyword>
<keyword id="KW-0408">Iron</keyword>
<keyword id="KW-0444">Lipid biosynthesis</keyword>
<keyword id="KW-0443">Lipid metabolism</keyword>
<keyword id="KW-0472">Membrane</keyword>
<keyword id="KW-0560">Oxidoreductase</keyword>
<keyword id="KW-1185">Reference proteome</keyword>
<keyword id="KW-0812">Transmembrane</keyword>
<keyword id="KW-1133">Transmembrane helix</keyword>
<evidence type="ECO:0000250" key="1">
    <source>
        <dbReference type="UniProtKB" id="O00767"/>
    </source>
</evidence>
<evidence type="ECO:0000250" key="2">
    <source>
        <dbReference type="UniProtKB" id="Q54795"/>
    </source>
</evidence>
<evidence type="ECO:0000255" key="3"/>
<evidence type="ECO:0000269" key="4">
    <source>
    </source>
</evidence>
<evidence type="ECO:0000269" key="5">
    <source>
    </source>
</evidence>
<evidence type="ECO:0000269" key="6">
    <source>
    </source>
</evidence>
<evidence type="ECO:0000269" key="7">
    <source>
    </source>
</evidence>
<evidence type="ECO:0000303" key="8">
    <source>
    </source>
</evidence>
<evidence type="ECO:0000305" key="9"/>
<evidence type="ECO:0000312" key="10">
    <source>
        <dbReference type="EMBL" id="BAA02924.1"/>
    </source>
</evidence>
<evidence type="ECO:0000312" key="11">
    <source>
        <dbReference type="EMBL" id="BAA18302.1"/>
    </source>
</evidence>
<dbReference type="EC" id="1.14.19.36" evidence="5"/>
<dbReference type="EMBL" id="D13780">
    <property type="protein sequence ID" value="BAA02924.1"/>
    <property type="molecule type" value="Genomic_DNA"/>
</dbReference>
<dbReference type="EMBL" id="BA000022">
    <property type="protein sequence ID" value="BAA18302.1"/>
    <property type="molecule type" value="Genomic_DNA"/>
</dbReference>
<dbReference type="SMR" id="Q79EF1"/>
<dbReference type="FunCoup" id="Q79EF1">
    <property type="interactions" value="280"/>
</dbReference>
<dbReference type="IntAct" id="Q79EF1">
    <property type="interactions" value="4"/>
</dbReference>
<dbReference type="STRING" id="1148.gene:10499178"/>
<dbReference type="PaxDb" id="1148-1653388"/>
<dbReference type="EnsemblBacteria" id="BAA18302">
    <property type="protein sequence ID" value="BAA18302"/>
    <property type="gene ID" value="BAA18302"/>
</dbReference>
<dbReference type="KEGG" id="syn:sll1441"/>
<dbReference type="eggNOG" id="COG3239">
    <property type="taxonomic scope" value="Bacteria"/>
</dbReference>
<dbReference type="InParanoid" id="Q79EF1"/>
<dbReference type="PhylomeDB" id="Q79EF1"/>
<dbReference type="BioCyc" id="MetaCyc:MONOMER-19030"/>
<dbReference type="BRENDA" id="1.14.19.36">
    <property type="organism ID" value="382"/>
</dbReference>
<dbReference type="UniPathway" id="UPA00658"/>
<dbReference type="Proteomes" id="UP000001425">
    <property type="component" value="Chromosome"/>
</dbReference>
<dbReference type="GO" id="GO:0016020">
    <property type="term" value="C:membrane"/>
    <property type="evidence" value="ECO:0007669"/>
    <property type="project" value="UniProtKB-SubCell"/>
</dbReference>
<dbReference type="GO" id="GO:0016491">
    <property type="term" value="F:oxidoreductase activity"/>
    <property type="evidence" value="ECO:0000318"/>
    <property type="project" value="GO_Central"/>
</dbReference>
<dbReference type="GO" id="GO:0006636">
    <property type="term" value="P:unsaturated fatty acid biosynthetic process"/>
    <property type="evidence" value="ECO:0007669"/>
    <property type="project" value="UniProtKB-UniPathway"/>
</dbReference>
<dbReference type="CDD" id="cd03507">
    <property type="entry name" value="Delta12-FADS-like"/>
    <property type="match status" value="1"/>
</dbReference>
<dbReference type="InterPro" id="IPR005804">
    <property type="entry name" value="FA_desaturase_dom"/>
</dbReference>
<dbReference type="InterPro" id="IPR012171">
    <property type="entry name" value="Fatty_acid_desaturase"/>
</dbReference>
<dbReference type="PANTHER" id="PTHR32100">
    <property type="entry name" value="OMEGA-6 FATTY ACID DESATURASE, CHLOROPLASTIC"/>
    <property type="match status" value="1"/>
</dbReference>
<dbReference type="Pfam" id="PF00487">
    <property type="entry name" value="FA_desaturase"/>
    <property type="match status" value="1"/>
</dbReference>
<gene>
    <name evidence="8" type="primary">desB</name>
    <name evidence="11" type="ordered locus">sll1441</name>
</gene>
<proteinExistence type="evidence at protein level"/>
<organism>
    <name type="scientific">Synechocystis sp. (strain ATCC 27184 / PCC 6803 / Kazusa)</name>
    <dbReference type="NCBI Taxonomy" id="1111708"/>
    <lineage>
        <taxon>Bacteria</taxon>
        <taxon>Bacillati</taxon>
        <taxon>Cyanobacteriota</taxon>
        <taxon>Cyanophyceae</taxon>
        <taxon>Synechococcales</taxon>
        <taxon>Merismopediaceae</taxon>
        <taxon>Synechocystis</taxon>
    </lineage>
</organism>
<name>DESB_SYNY3</name>
<feature type="chain" id="PRO_0000459796" description="sn-1 acyl-lipid omega-3 desaturase (ferredoxin)">
    <location>
        <begin position="1"/>
        <end position="359"/>
    </location>
</feature>
<feature type="transmembrane region" description="Helical" evidence="3">
    <location>
        <begin position="44"/>
        <end position="64"/>
    </location>
</feature>
<feature type="transmembrane region" description="Helical" evidence="3">
    <location>
        <begin position="67"/>
        <end position="87"/>
    </location>
</feature>
<feature type="transmembrane region" description="Helical" evidence="3">
    <location>
        <begin position="153"/>
        <end position="173"/>
    </location>
</feature>
<feature type="transmembrane region" description="Helical" evidence="3">
    <location>
        <begin position="206"/>
        <end position="226"/>
    </location>
</feature>
<feature type="transmembrane region" description="Helical" evidence="3">
    <location>
        <begin position="228"/>
        <end position="248"/>
    </location>
</feature>
<feature type="short sequence motif" description="Histidine box-1" evidence="2">
    <location>
        <begin position="89"/>
        <end position="93"/>
    </location>
</feature>
<feature type="short sequence motif" description="Histidine box-2" evidence="2">
    <location>
        <begin position="125"/>
        <end position="129"/>
    </location>
</feature>
<feature type="short sequence motif" description="Histidine box-3" evidence="2">
    <location>
        <begin position="291"/>
        <end position="295"/>
    </location>
</feature>
<sequence length="359" mass="41919">MRLEISSPQTKLPYPKTEELPFTLQELRNAIPADCFEPSVVRSLGYFFLDVGLIAGFYALAAYLDSWFFYPIFWLIQGTLFWSLFVVGHDCGHGSFSKSKTLNNWIGHLSHTPILVPYHGWRISHRTHHANTGNIDTDESWYPVSEQKYNQMAWYEKLLRFYLPLIAYPIYLFRRSPNRQGSHFMPGSPLFRPGEKAAVLTSTFALAAFVGFLGFLTWQFGWLFLLKFYVAPYLVFVVWLDLVTFLHHTEDNIPWYRGDDWYFLKGALSTIDRDYGFINPIHHDIGTHVAHHIFSNMPHYKLRRATEAIKPILGEYYRYSDEPIWQAFFKSYWACHFVPNQGSGVYYQSPSNGGYQKKP</sequence>
<comment type="function">
    <text evidence="5">Desaturase involved in fatty acid biosynthesis (PubMed:7524725). Introduces a double bond at carbon 15 of linoleoyl and gamma-linolenoyl groups attached to the sn-1 position of the glycerol moiety of membrane glycerolipids (PubMed:7524725).</text>
</comment>
<comment type="catalytic activity">
    <reaction evidence="5">
        <text>a 1-[(9Z,12Z)-octadecdienoyl]-2-acyl-glycerolipid + 2 reduced [2Fe-2S]-[ferredoxin] + O2 + 2 H(+) = a 1-[(9Z,12Z,15Z)-octadectrienoyl]-2-acyl-glycerolipid + 2 oxidized [2Fe-2S]-[ferredoxin] + 2 H2O</text>
        <dbReference type="Rhea" id="RHEA:46784"/>
        <dbReference type="Rhea" id="RHEA-COMP:10000"/>
        <dbReference type="Rhea" id="RHEA-COMP:10001"/>
        <dbReference type="ChEBI" id="CHEBI:15377"/>
        <dbReference type="ChEBI" id="CHEBI:15378"/>
        <dbReference type="ChEBI" id="CHEBI:15379"/>
        <dbReference type="ChEBI" id="CHEBI:33737"/>
        <dbReference type="ChEBI" id="CHEBI:33738"/>
        <dbReference type="ChEBI" id="CHEBI:87010"/>
        <dbReference type="ChEBI" id="CHEBI:87023"/>
        <dbReference type="EC" id="1.14.19.36"/>
    </reaction>
    <physiologicalReaction direction="left-to-right" evidence="5">
        <dbReference type="Rhea" id="RHEA:46785"/>
    </physiologicalReaction>
</comment>
<comment type="catalytic activity">
    <reaction evidence="5">
        <text>a 1-[(6Z,9Z,12Z)-octadectrienoyl]-2-acyl-glycerolipid + 2 reduced [2Fe-2S]-[ferredoxin] + O2 + 2 H(+) = a 1-[(6Z,9Z,12Z,15Z)-octadectetraenoyl]-2-acyl-glycerolipid + 2 oxidized [2Fe-2S]-[ferredoxin] + 2 H2O</text>
        <dbReference type="Rhea" id="RHEA:46788"/>
        <dbReference type="Rhea" id="RHEA-COMP:10000"/>
        <dbReference type="Rhea" id="RHEA-COMP:10001"/>
        <dbReference type="ChEBI" id="CHEBI:15377"/>
        <dbReference type="ChEBI" id="CHEBI:15378"/>
        <dbReference type="ChEBI" id="CHEBI:15379"/>
        <dbReference type="ChEBI" id="CHEBI:33737"/>
        <dbReference type="ChEBI" id="CHEBI:33738"/>
        <dbReference type="ChEBI" id="CHEBI:87017"/>
        <dbReference type="ChEBI" id="CHEBI:87024"/>
        <dbReference type="EC" id="1.14.19.36"/>
    </reaction>
    <physiologicalReaction direction="left-to-right" evidence="5">
        <dbReference type="Rhea" id="RHEA:46789"/>
    </physiologicalReaction>
</comment>
<comment type="cofactor">
    <cofactor evidence="1">
        <name>Fe(2+)</name>
        <dbReference type="ChEBI" id="CHEBI:29033"/>
    </cofactor>
</comment>
<comment type="pathway">
    <text evidence="5 6">Lipid metabolism; polyunsaturated fatty acid biosynthesis.</text>
</comment>
<comment type="subcellular location">
    <subcellularLocation>
        <location evidence="3">Membrane</location>
        <topology evidence="3">Multi-pass membrane protein</topology>
    </subcellularLocation>
</comment>
<comment type="induction">
    <text evidence="4 5 7">The level of transcripts is negligible in the dark-grown cells and is enhanced about 10-fold by exposure of the cells to light (PubMed:9539715). Low basic levels of the gene transcripts increase rapidly upon exposure to low temperature and decrease again to low levels in cells shifted back to high temperature (PubMed:9539715). Expression in cells grown at 22 degrees Celsius is 10 times higher than expression in cells grown at 34 degrees Celsius (PubMed:7524725). The induction of expression is completely blocked in the presence of rifampicin, chloramphenicol and 3-(3,4-dichlorophenyl)-1,1-dimethylurea (DCMU) (PubMed:9539715). The histidine kinases Hik-19 and Hik-33, and Rerl, a response regulator, might be involved in the perception and transduction of low temperature signals to DesB (PubMed:11171149).</text>
</comment>
<comment type="domain">
    <text evidence="1">The histidine box domains are involved in binding the catalytic metal ions.</text>
</comment>
<comment type="disruption phenotype">
    <text evidence="5 6">The disruption mutant loses the ability to desaturate fatty acids at the carbon 15 position.</text>
</comment>
<comment type="similarity">
    <text evidence="9">Belongs to the fatty acid desaturase type 2 family.</text>
</comment>
<accession>Q79EF1</accession>
<accession>Q55240</accession>
<protein>
    <recommendedName>
        <fullName evidence="9">sn-1 acyl-lipid omega-3 desaturase (ferredoxin)</fullName>
        <ecNumber evidence="5">1.14.19.36</ecNumber>
    </recommendedName>
    <alternativeName>
        <fullName evidence="9">Delta(15)-fatty-acid desaturase</fullName>
        <shortName evidence="10 11">Delta 15 desaturase</shortName>
    </alternativeName>
    <alternativeName>
        <fullName evidence="9">Omega 3 acyl-lipid desaturase</fullName>
        <shortName evidence="8">Omega 3 desaturase</shortName>
    </alternativeName>
</protein>